<evidence type="ECO:0000255" key="1">
    <source>
        <dbReference type="HAMAP-Rule" id="MF_00011"/>
    </source>
</evidence>
<gene>
    <name evidence="1" type="primary">purA</name>
    <name type="ordered locus">Ecaj_0564</name>
</gene>
<accession>Q3YRQ6</accession>
<reference key="1">
    <citation type="journal article" date="2006" name="J. Bacteriol.">
        <title>The genome of the obligately intracellular bacterium Ehrlichia canis reveals themes of complex membrane structure and immune evasion strategies.</title>
        <authorList>
            <person name="Mavromatis K."/>
            <person name="Doyle C.K."/>
            <person name="Lykidis A."/>
            <person name="Ivanova N."/>
            <person name="Francino M.P."/>
            <person name="Chain P."/>
            <person name="Shin M."/>
            <person name="Malfatti S."/>
            <person name="Larimer F."/>
            <person name="Copeland A."/>
            <person name="Detter J.C."/>
            <person name="Land M."/>
            <person name="Richardson P.M."/>
            <person name="Yu X.J."/>
            <person name="Walker D.H."/>
            <person name="McBride J.W."/>
            <person name="Kyrpides N.C."/>
        </authorList>
    </citation>
    <scope>NUCLEOTIDE SEQUENCE [LARGE SCALE GENOMIC DNA]</scope>
    <source>
        <strain>Jake</strain>
    </source>
</reference>
<sequence>MVNIIVVGLQWGDEGKGKVVDWLSTNADAVVRFQGGNNAGHTIVVNDNVYKLNLLPSSVLQNGKLSIIGNGVVLDPYALISEIENLKSNGINITSQNFAISESCPLVLSVHKQADMLFEQLRQDTIGTTNKGIGPCYADKISRRAIRVCDLFDPKDLLHNKVNHLLSYHNLLRKNINNPSIETENIVNELLSIAPKILPFVQPVWKTIHNLIEQNKTIIFEGAQGTFLDIDHGTYPFVTSSNTIAQQAFIGCGINPSNKTHILGLVKAYTTRVGNGPFFTEQNNNIGKTMFESGKELGTVSNRQRRCGWFDAVLARQAVILSGVSGLVMTKLDVLDQFSEIKICVKYKYENKIYDYLPASPYIQSKLEPVYETLPGWQTSTFGSVSYKDLPQNAISYIKKIEEILKVPIYLISTGPERNSMIIINNDFLYK</sequence>
<dbReference type="EC" id="6.3.4.4" evidence="1"/>
<dbReference type="EMBL" id="CP000107">
    <property type="protein sequence ID" value="AAZ68599.1"/>
    <property type="molecule type" value="Genomic_DNA"/>
</dbReference>
<dbReference type="RefSeq" id="WP_011304677.1">
    <property type="nucleotide sequence ID" value="NC_007354.1"/>
</dbReference>
<dbReference type="SMR" id="Q3YRQ6"/>
<dbReference type="FunCoup" id="Q3YRQ6">
    <property type="interactions" value="332"/>
</dbReference>
<dbReference type="STRING" id="269484.Ecaj_0564"/>
<dbReference type="KEGG" id="ecn:Ecaj_0564"/>
<dbReference type="eggNOG" id="COG0104">
    <property type="taxonomic scope" value="Bacteria"/>
</dbReference>
<dbReference type="HOGENOM" id="CLU_029848_0_0_5"/>
<dbReference type="InParanoid" id="Q3YRQ6"/>
<dbReference type="UniPathway" id="UPA00075">
    <property type="reaction ID" value="UER00335"/>
</dbReference>
<dbReference type="Proteomes" id="UP000000435">
    <property type="component" value="Chromosome"/>
</dbReference>
<dbReference type="GO" id="GO:0005737">
    <property type="term" value="C:cytoplasm"/>
    <property type="evidence" value="ECO:0007669"/>
    <property type="project" value="UniProtKB-SubCell"/>
</dbReference>
<dbReference type="GO" id="GO:0004019">
    <property type="term" value="F:adenylosuccinate synthase activity"/>
    <property type="evidence" value="ECO:0007669"/>
    <property type="project" value="UniProtKB-UniRule"/>
</dbReference>
<dbReference type="GO" id="GO:0005525">
    <property type="term" value="F:GTP binding"/>
    <property type="evidence" value="ECO:0007669"/>
    <property type="project" value="UniProtKB-UniRule"/>
</dbReference>
<dbReference type="GO" id="GO:0000287">
    <property type="term" value="F:magnesium ion binding"/>
    <property type="evidence" value="ECO:0007669"/>
    <property type="project" value="UniProtKB-UniRule"/>
</dbReference>
<dbReference type="GO" id="GO:0044208">
    <property type="term" value="P:'de novo' AMP biosynthetic process"/>
    <property type="evidence" value="ECO:0007669"/>
    <property type="project" value="UniProtKB-UniRule"/>
</dbReference>
<dbReference type="GO" id="GO:0046040">
    <property type="term" value="P:IMP metabolic process"/>
    <property type="evidence" value="ECO:0007669"/>
    <property type="project" value="TreeGrafter"/>
</dbReference>
<dbReference type="CDD" id="cd03108">
    <property type="entry name" value="AdSS"/>
    <property type="match status" value="1"/>
</dbReference>
<dbReference type="FunFam" id="1.10.300.10:FF:000001">
    <property type="entry name" value="Adenylosuccinate synthetase"/>
    <property type="match status" value="1"/>
</dbReference>
<dbReference type="FunFam" id="3.90.170.10:FF:000001">
    <property type="entry name" value="Adenylosuccinate synthetase"/>
    <property type="match status" value="1"/>
</dbReference>
<dbReference type="Gene3D" id="3.40.440.10">
    <property type="entry name" value="Adenylosuccinate Synthetase, subunit A, domain 1"/>
    <property type="match status" value="1"/>
</dbReference>
<dbReference type="Gene3D" id="1.10.300.10">
    <property type="entry name" value="Adenylosuccinate Synthetase, subunit A, domain 2"/>
    <property type="match status" value="1"/>
</dbReference>
<dbReference type="Gene3D" id="3.90.170.10">
    <property type="entry name" value="Adenylosuccinate Synthetase, subunit A, domain 3"/>
    <property type="match status" value="1"/>
</dbReference>
<dbReference type="HAMAP" id="MF_00011">
    <property type="entry name" value="Adenylosucc_synth"/>
    <property type="match status" value="1"/>
</dbReference>
<dbReference type="InterPro" id="IPR018220">
    <property type="entry name" value="Adenylosuccin_syn_GTP-bd"/>
</dbReference>
<dbReference type="InterPro" id="IPR033128">
    <property type="entry name" value="Adenylosuccin_syn_Lys_AS"/>
</dbReference>
<dbReference type="InterPro" id="IPR042109">
    <property type="entry name" value="Adenylosuccinate_synth_dom1"/>
</dbReference>
<dbReference type="InterPro" id="IPR042110">
    <property type="entry name" value="Adenylosuccinate_synth_dom2"/>
</dbReference>
<dbReference type="InterPro" id="IPR042111">
    <property type="entry name" value="Adenylosuccinate_synth_dom3"/>
</dbReference>
<dbReference type="InterPro" id="IPR001114">
    <property type="entry name" value="Adenylosuccinate_synthetase"/>
</dbReference>
<dbReference type="InterPro" id="IPR027417">
    <property type="entry name" value="P-loop_NTPase"/>
</dbReference>
<dbReference type="NCBIfam" id="NF002223">
    <property type="entry name" value="PRK01117.1"/>
    <property type="match status" value="1"/>
</dbReference>
<dbReference type="NCBIfam" id="TIGR00184">
    <property type="entry name" value="purA"/>
    <property type="match status" value="1"/>
</dbReference>
<dbReference type="PANTHER" id="PTHR11846">
    <property type="entry name" value="ADENYLOSUCCINATE SYNTHETASE"/>
    <property type="match status" value="1"/>
</dbReference>
<dbReference type="PANTHER" id="PTHR11846:SF0">
    <property type="entry name" value="ADENYLOSUCCINATE SYNTHETASE"/>
    <property type="match status" value="1"/>
</dbReference>
<dbReference type="Pfam" id="PF00709">
    <property type="entry name" value="Adenylsucc_synt"/>
    <property type="match status" value="1"/>
</dbReference>
<dbReference type="SMART" id="SM00788">
    <property type="entry name" value="Adenylsucc_synt"/>
    <property type="match status" value="1"/>
</dbReference>
<dbReference type="SUPFAM" id="SSF52540">
    <property type="entry name" value="P-loop containing nucleoside triphosphate hydrolases"/>
    <property type="match status" value="1"/>
</dbReference>
<dbReference type="PROSITE" id="PS01266">
    <property type="entry name" value="ADENYLOSUCCIN_SYN_1"/>
    <property type="match status" value="1"/>
</dbReference>
<dbReference type="PROSITE" id="PS00513">
    <property type="entry name" value="ADENYLOSUCCIN_SYN_2"/>
    <property type="match status" value="1"/>
</dbReference>
<name>PURA_EHRCJ</name>
<comment type="function">
    <text evidence="1">Plays an important role in the de novo pathway of purine nucleotide biosynthesis. Catalyzes the first committed step in the biosynthesis of AMP from IMP.</text>
</comment>
<comment type="catalytic activity">
    <reaction evidence="1">
        <text>IMP + L-aspartate + GTP = N(6)-(1,2-dicarboxyethyl)-AMP + GDP + phosphate + 2 H(+)</text>
        <dbReference type="Rhea" id="RHEA:15753"/>
        <dbReference type="ChEBI" id="CHEBI:15378"/>
        <dbReference type="ChEBI" id="CHEBI:29991"/>
        <dbReference type="ChEBI" id="CHEBI:37565"/>
        <dbReference type="ChEBI" id="CHEBI:43474"/>
        <dbReference type="ChEBI" id="CHEBI:57567"/>
        <dbReference type="ChEBI" id="CHEBI:58053"/>
        <dbReference type="ChEBI" id="CHEBI:58189"/>
        <dbReference type="EC" id="6.3.4.4"/>
    </reaction>
</comment>
<comment type="cofactor">
    <cofactor evidence="1">
        <name>Mg(2+)</name>
        <dbReference type="ChEBI" id="CHEBI:18420"/>
    </cofactor>
    <text evidence="1">Binds 1 Mg(2+) ion per subunit.</text>
</comment>
<comment type="pathway">
    <text evidence="1">Purine metabolism; AMP biosynthesis via de novo pathway; AMP from IMP: step 1/2.</text>
</comment>
<comment type="subunit">
    <text evidence="1">Homodimer.</text>
</comment>
<comment type="subcellular location">
    <subcellularLocation>
        <location evidence="1">Cytoplasm</location>
    </subcellularLocation>
</comment>
<comment type="similarity">
    <text evidence="1">Belongs to the adenylosuccinate synthetase family.</text>
</comment>
<feature type="chain" id="PRO_0000224277" description="Adenylosuccinate synthetase">
    <location>
        <begin position="1"/>
        <end position="431"/>
    </location>
</feature>
<feature type="active site" description="Proton acceptor" evidence="1">
    <location>
        <position position="13"/>
    </location>
</feature>
<feature type="active site" description="Proton donor" evidence="1">
    <location>
        <position position="41"/>
    </location>
</feature>
<feature type="binding site" evidence="1">
    <location>
        <begin position="12"/>
        <end position="18"/>
    </location>
    <ligand>
        <name>GTP</name>
        <dbReference type="ChEBI" id="CHEBI:37565"/>
    </ligand>
</feature>
<feature type="binding site" description="in other chain" evidence="1">
    <location>
        <begin position="13"/>
        <end position="16"/>
    </location>
    <ligand>
        <name>IMP</name>
        <dbReference type="ChEBI" id="CHEBI:58053"/>
        <note>ligand shared between dimeric partners</note>
    </ligand>
</feature>
<feature type="binding site" evidence="1">
    <location>
        <position position="13"/>
    </location>
    <ligand>
        <name>Mg(2+)</name>
        <dbReference type="ChEBI" id="CHEBI:18420"/>
    </ligand>
</feature>
<feature type="binding site" description="in other chain" evidence="1">
    <location>
        <begin position="38"/>
        <end position="41"/>
    </location>
    <ligand>
        <name>IMP</name>
        <dbReference type="ChEBI" id="CHEBI:58053"/>
        <note>ligand shared between dimeric partners</note>
    </ligand>
</feature>
<feature type="binding site" evidence="1">
    <location>
        <begin position="40"/>
        <end position="42"/>
    </location>
    <ligand>
        <name>GTP</name>
        <dbReference type="ChEBI" id="CHEBI:37565"/>
    </ligand>
</feature>
<feature type="binding site" evidence="1">
    <location>
        <position position="40"/>
    </location>
    <ligand>
        <name>Mg(2+)</name>
        <dbReference type="ChEBI" id="CHEBI:18420"/>
    </ligand>
</feature>
<feature type="binding site" description="in other chain" evidence="1">
    <location>
        <position position="129"/>
    </location>
    <ligand>
        <name>IMP</name>
        <dbReference type="ChEBI" id="CHEBI:58053"/>
        <note>ligand shared between dimeric partners</note>
    </ligand>
</feature>
<feature type="binding site" evidence="1">
    <location>
        <position position="143"/>
    </location>
    <ligand>
        <name>IMP</name>
        <dbReference type="ChEBI" id="CHEBI:58053"/>
        <note>ligand shared between dimeric partners</note>
    </ligand>
</feature>
<feature type="binding site" description="in other chain" evidence="1">
    <location>
        <position position="224"/>
    </location>
    <ligand>
        <name>IMP</name>
        <dbReference type="ChEBI" id="CHEBI:58053"/>
        <note>ligand shared between dimeric partners</note>
    </ligand>
</feature>
<feature type="binding site" description="in other chain" evidence="1">
    <location>
        <position position="239"/>
    </location>
    <ligand>
        <name>IMP</name>
        <dbReference type="ChEBI" id="CHEBI:58053"/>
        <note>ligand shared between dimeric partners</note>
    </ligand>
</feature>
<feature type="binding site" evidence="1">
    <location>
        <begin position="299"/>
        <end position="305"/>
    </location>
    <ligand>
        <name>substrate</name>
    </ligand>
</feature>
<feature type="binding site" description="in other chain" evidence="1">
    <location>
        <position position="303"/>
    </location>
    <ligand>
        <name>IMP</name>
        <dbReference type="ChEBI" id="CHEBI:58053"/>
        <note>ligand shared between dimeric partners</note>
    </ligand>
</feature>
<feature type="binding site" evidence="1">
    <location>
        <position position="305"/>
    </location>
    <ligand>
        <name>GTP</name>
        <dbReference type="ChEBI" id="CHEBI:37565"/>
    </ligand>
</feature>
<feature type="binding site" evidence="1">
    <location>
        <begin position="331"/>
        <end position="333"/>
    </location>
    <ligand>
        <name>GTP</name>
        <dbReference type="ChEBI" id="CHEBI:37565"/>
    </ligand>
</feature>
<feature type="binding site" evidence="1">
    <location>
        <begin position="413"/>
        <end position="415"/>
    </location>
    <ligand>
        <name>GTP</name>
        <dbReference type="ChEBI" id="CHEBI:37565"/>
    </ligand>
</feature>
<proteinExistence type="inferred from homology"/>
<protein>
    <recommendedName>
        <fullName evidence="1">Adenylosuccinate synthetase</fullName>
        <shortName evidence="1">AMPSase</shortName>
        <shortName evidence="1">AdSS</shortName>
        <ecNumber evidence="1">6.3.4.4</ecNumber>
    </recommendedName>
    <alternativeName>
        <fullName evidence="1">IMP--aspartate ligase</fullName>
    </alternativeName>
</protein>
<organism>
    <name type="scientific">Ehrlichia canis (strain Jake)</name>
    <dbReference type="NCBI Taxonomy" id="269484"/>
    <lineage>
        <taxon>Bacteria</taxon>
        <taxon>Pseudomonadati</taxon>
        <taxon>Pseudomonadota</taxon>
        <taxon>Alphaproteobacteria</taxon>
        <taxon>Rickettsiales</taxon>
        <taxon>Anaplasmataceae</taxon>
        <taxon>Ehrlichia</taxon>
    </lineage>
</organism>
<keyword id="KW-0963">Cytoplasm</keyword>
<keyword id="KW-0342">GTP-binding</keyword>
<keyword id="KW-0436">Ligase</keyword>
<keyword id="KW-0460">Magnesium</keyword>
<keyword id="KW-0479">Metal-binding</keyword>
<keyword id="KW-0547">Nucleotide-binding</keyword>
<keyword id="KW-0658">Purine biosynthesis</keyword>